<reference key="1">
    <citation type="journal article" date="2008" name="Genome Biol.">
        <title>The complete genome, comparative and functional analysis of Stenotrophomonas maltophilia reveals an organism heavily shielded by drug resistance determinants.</title>
        <authorList>
            <person name="Crossman L.C."/>
            <person name="Gould V.C."/>
            <person name="Dow J.M."/>
            <person name="Vernikos G.S."/>
            <person name="Okazaki A."/>
            <person name="Sebaihia M."/>
            <person name="Saunders D."/>
            <person name="Arrowsmith C."/>
            <person name="Carver T."/>
            <person name="Peters N."/>
            <person name="Adlem E."/>
            <person name="Kerhornou A."/>
            <person name="Lord A."/>
            <person name="Murphy L."/>
            <person name="Seeger K."/>
            <person name="Squares R."/>
            <person name="Rutter S."/>
            <person name="Quail M.A."/>
            <person name="Rajandream M.A."/>
            <person name="Harris D."/>
            <person name="Churcher C."/>
            <person name="Bentley S.D."/>
            <person name="Parkhill J."/>
            <person name="Thomson N.R."/>
            <person name="Avison M.B."/>
        </authorList>
    </citation>
    <scope>NUCLEOTIDE SEQUENCE [LARGE SCALE GENOMIC DNA]</scope>
    <source>
        <strain>K279a</strain>
    </source>
</reference>
<proteinExistence type="inferred from homology"/>
<protein>
    <recommendedName>
        <fullName evidence="1">D-aminoacyl-tRNA deacylase</fullName>
        <shortName evidence="1">DTD</shortName>
        <ecNumber evidence="1">3.1.1.96</ecNumber>
    </recommendedName>
    <alternativeName>
        <fullName evidence="1">Gly-tRNA(Ala) deacylase</fullName>
    </alternativeName>
</protein>
<sequence length="146" mass="15776">MLVLIQRVSQAAVHVDDEAVGQIGPGLLALVGMEPGDTEAQLRRMAERLLGYRVFADEAGKMNRSLRDTGGGLLLVSQFTLAADTRSGMRPSFTTAAPPEEAERGFNRFVEICRENHAPGVETGRFGAHMVVSLVNDGPVTFLLRP</sequence>
<accession>B2FIQ2</accession>
<evidence type="ECO:0000255" key="1">
    <source>
        <dbReference type="HAMAP-Rule" id="MF_00518"/>
    </source>
</evidence>
<comment type="function">
    <text evidence="1">An aminoacyl-tRNA editing enzyme that deacylates mischarged D-aminoacyl-tRNAs. Also deacylates mischarged glycyl-tRNA(Ala), protecting cells against glycine mischarging by AlaRS. Acts via tRNA-based rather than protein-based catalysis; rejects L-amino acids rather than detecting D-amino acids in the active site. By recycling D-aminoacyl-tRNA to D-amino acids and free tRNA molecules, this enzyme counteracts the toxicity associated with the formation of D-aminoacyl-tRNA entities in vivo and helps enforce protein L-homochirality.</text>
</comment>
<comment type="catalytic activity">
    <reaction evidence="1">
        <text>glycyl-tRNA(Ala) + H2O = tRNA(Ala) + glycine + H(+)</text>
        <dbReference type="Rhea" id="RHEA:53744"/>
        <dbReference type="Rhea" id="RHEA-COMP:9657"/>
        <dbReference type="Rhea" id="RHEA-COMP:13640"/>
        <dbReference type="ChEBI" id="CHEBI:15377"/>
        <dbReference type="ChEBI" id="CHEBI:15378"/>
        <dbReference type="ChEBI" id="CHEBI:57305"/>
        <dbReference type="ChEBI" id="CHEBI:78442"/>
        <dbReference type="ChEBI" id="CHEBI:78522"/>
        <dbReference type="EC" id="3.1.1.96"/>
    </reaction>
</comment>
<comment type="catalytic activity">
    <reaction evidence="1">
        <text>a D-aminoacyl-tRNA + H2O = a tRNA + a D-alpha-amino acid + H(+)</text>
        <dbReference type="Rhea" id="RHEA:13953"/>
        <dbReference type="Rhea" id="RHEA-COMP:10123"/>
        <dbReference type="Rhea" id="RHEA-COMP:10124"/>
        <dbReference type="ChEBI" id="CHEBI:15377"/>
        <dbReference type="ChEBI" id="CHEBI:15378"/>
        <dbReference type="ChEBI" id="CHEBI:59871"/>
        <dbReference type="ChEBI" id="CHEBI:78442"/>
        <dbReference type="ChEBI" id="CHEBI:79333"/>
        <dbReference type="EC" id="3.1.1.96"/>
    </reaction>
</comment>
<comment type="subunit">
    <text evidence="1">Homodimer.</text>
</comment>
<comment type="subcellular location">
    <subcellularLocation>
        <location evidence="1">Cytoplasm</location>
    </subcellularLocation>
</comment>
<comment type="domain">
    <text evidence="1">A Gly-cisPro motif from one monomer fits into the active site of the other monomer to allow specific chiral rejection of L-amino acids.</text>
</comment>
<comment type="similarity">
    <text evidence="1">Belongs to the DTD family.</text>
</comment>
<keyword id="KW-0963">Cytoplasm</keyword>
<keyword id="KW-0378">Hydrolase</keyword>
<keyword id="KW-1185">Reference proteome</keyword>
<keyword id="KW-0694">RNA-binding</keyword>
<keyword id="KW-0820">tRNA-binding</keyword>
<organism>
    <name type="scientific">Stenotrophomonas maltophilia (strain K279a)</name>
    <dbReference type="NCBI Taxonomy" id="522373"/>
    <lineage>
        <taxon>Bacteria</taxon>
        <taxon>Pseudomonadati</taxon>
        <taxon>Pseudomonadota</taxon>
        <taxon>Gammaproteobacteria</taxon>
        <taxon>Lysobacterales</taxon>
        <taxon>Lysobacteraceae</taxon>
        <taxon>Stenotrophomonas</taxon>
        <taxon>Stenotrophomonas maltophilia group</taxon>
    </lineage>
</organism>
<gene>
    <name evidence="1" type="primary">dtd</name>
    <name type="ordered locus">Smlt4166</name>
</gene>
<feature type="chain" id="PRO_1000127579" description="D-aminoacyl-tRNA deacylase">
    <location>
        <begin position="1"/>
        <end position="146"/>
    </location>
</feature>
<feature type="short sequence motif" description="Gly-cisPro motif, important for rejection of L-amino acids" evidence="1">
    <location>
        <begin position="138"/>
        <end position="139"/>
    </location>
</feature>
<dbReference type="EC" id="3.1.1.96" evidence="1"/>
<dbReference type="EMBL" id="AM743169">
    <property type="protein sequence ID" value="CAQ47557.1"/>
    <property type="molecule type" value="Genomic_DNA"/>
</dbReference>
<dbReference type="RefSeq" id="WP_005411180.1">
    <property type="nucleotide sequence ID" value="NC_010943.1"/>
</dbReference>
<dbReference type="SMR" id="B2FIQ2"/>
<dbReference type="EnsemblBacteria" id="CAQ47557">
    <property type="protein sequence ID" value="CAQ47557"/>
    <property type="gene ID" value="Smlt4166"/>
</dbReference>
<dbReference type="GeneID" id="93835127"/>
<dbReference type="KEGG" id="sml:Smlt4166"/>
<dbReference type="eggNOG" id="COG1490">
    <property type="taxonomic scope" value="Bacteria"/>
</dbReference>
<dbReference type="HOGENOM" id="CLU_076901_1_1_6"/>
<dbReference type="Proteomes" id="UP000008840">
    <property type="component" value="Chromosome"/>
</dbReference>
<dbReference type="GO" id="GO:0005737">
    <property type="term" value="C:cytoplasm"/>
    <property type="evidence" value="ECO:0007669"/>
    <property type="project" value="UniProtKB-SubCell"/>
</dbReference>
<dbReference type="GO" id="GO:0051500">
    <property type="term" value="F:D-tyrosyl-tRNA(Tyr) deacylase activity"/>
    <property type="evidence" value="ECO:0007669"/>
    <property type="project" value="TreeGrafter"/>
</dbReference>
<dbReference type="GO" id="GO:0106026">
    <property type="term" value="F:Gly-tRNA(Ala) deacylase activity"/>
    <property type="evidence" value="ECO:0007669"/>
    <property type="project" value="UniProtKB-UniRule"/>
</dbReference>
<dbReference type="GO" id="GO:0043908">
    <property type="term" value="F:Ser(Gly)-tRNA(Ala) hydrolase activity"/>
    <property type="evidence" value="ECO:0007669"/>
    <property type="project" value="UniProtKB-UniRule"/>
</dbReference>
<dbReference type="GO" id="GO:0000049">
    <property type="term" value="F:tRNA binding"/>
    <property type="evidence" value="ECO:0007669"/>
    <property type="project" value="UniProtKB-UniRule"/>
</dbReference>
<dbReference type="GO" id="GO:0019478">
    <property type="term" value="P:D-amino acid catabolic process"/>
    <property type="evidence" value="ECO:0007669"/>
    <property type="project" value="UniProtKB-UniRule"/>
</dbReference>
<dbReference type="CDD" id="cd00563">
    <property type="entry name" value="Dtyr_deacylase"/>
    <property type="match status" value="1"/>
</dbReference>
<dbReference type="FunFam" id="3.50.80.10:FF:000001">
    <property type="entry name" value="D-aminoacyl-tRNA deacylase"/>
    <property type="match status" value="1"/>
</dbReference>
<dbReference type="Gene3D" id="3.50.80.10">
    <property type="entry name" value="D-tyrosyl-tRNA(Tyr) deacylase"/>
    <property type="match status" value="1"/>
</dbReference>
<dbReference type="HAMAP" id="MF_00518">
    <property type="entry name" value="Deacylase_Dtd"/>
    <property type="match status" value="1"/>
</dbReference>
<dbReference type="InterPro" id="IPR003732">
    <property type="entry name" value="Daa-tRNA_deacyls_DTD"/>
</dbReference>
<dbReference type="InterPro" id="IPR023509">
    <property type="entry name" value="DTD-like_sf"/>
</dbReference>
<dbReference type="NCBIfam" id="TIGR00256">
    <property type="entry name" value="D-aminoacyl-tRNA deacylase"/>
    <property type="match status" value="1"/>
</dbReference>
<dbReference type="PANTHER" id="PTHR10472:SF5">
    <property type="entry name" value="D-AMINOACYL-TRNA DEACYLASE 1"/>
    <property type="match status" value="1"/>
</dbReference>
<dbReference type="PANTHER" id="PTHR10472">
    <property type="entry name" value="D-TYROSYL-TRNA TYR DEACYLASE"/>
    <property type="match status" value="1"/>
</dbReference>
<dbReference type="Pfam" id="PF02580">
    <property type="entry name" value="Tyr_Deacylase"/>
    <property type="match status" value="1"/>
</dbReference>
<dbReference type="SUPFAM" id="SSF69500">
    <property type="entry name" value="DTD-like"/>
    <property type="match status" value="1"/>
</dbReference>
<name>DTD_STRMK</name>